<gene>
    <name evidence="1" type="primary">trpD</name>
    <name type="ordered locus">BAA_1326</name>
</gene>
<evidence type="ECO:0000255" key="1">
    <source>
        <dbReference type="HAMAP-Rule" id="MF_00211"/>
    </source>
</evidence>
<keyword id="KW-0028">Amino-acid biosynthesis</keyword>
<keyword id="KW-0057">Aromatic amino acid biosynthesis</keyword>
<keyword id="KW-0328">Glycosyltransferase</keyword>
<keyword id="KW-0460">Magnesium</keyword>
<keyword id="KW-0479">Metal-binding</keyword>
<keyword id="KW-0808">Transferase</keyword>
<keyword id="KW-0822">Tryptophan biosynthesis</keyword>
<feature type="chain" id="PRO_1000198799" description="Anthranilate phosphoribosyltransferase">
    <location>
        <begin position="1"/>
        <end position="341"/>
    </location>
</feature>
<feature type="binding site" evidence="1">
    <location>
        <position position="79"/>
    </location>
    <ligand>
        <name>5-phospho-alpha-D-ribose 1-diphosphate</name>
        <dbReference type="ChEBI" id="CHEBI:58017"/>
    </ligand>
</feature>
<feature type="binding site" evidence="1">
    <location>
        <position position="79"/>
    </location>
    <ligand>
        <name>anthranilate</name>
        <dbReference type="ChEBI" id="CHEBI:16567"/>
        <label>1</label>
    </ligand>
</feature>
<feature type="binding site" evidence="1">
    <location>
        <begin position="82"/>
        <end position="83"/>
    </location>
    <ligand>
        <name>5-phospho-alpha-D-ribose 1-diphosphate</name>
        <dbReference type="ChEBI" id="CHEBI:58017"/>
    </ligand>
</feature>
<feature type="binding site" evidence="1">
    <location>
        <position position="87"/>
    </location>
    <ligand>
        <name>5-phospho-alpha-D-ribose 1-diphosphate</name>
        <dbReference type="ChEBI" id="CHEBI:58017"/>
    </ligand>
</feature>
<feature type="binding site" evidence="1">
    <location>
        <begin position="89"/>
        <end position="92"/>
    </location>
    <ligand>
        <name>5-phospho-alpha-D-ribose 1-diphosphate</name>
        <dbReference type="ChEBI" id="CHEBI:58017"/>
    </ligand>
</feature>
<feature type="binding site" evidence="1">
    <location>
        <position position="91"/>
    </location>
    <ligand>
        <name>Mg(2+)</name>
        <dbReference type="ChEBI" id="CHEBI:18420"/>
        <label>1</label>
    </ligand>
</feature>
<feature type="binding site" evidence="1">
    <location>
        <begin position="107"/>
        <end position="115"/>
    </location>
    <ligand>
        <name>5-phospho-alpha-D-ribose 1-diphosphate</name>
        <dbReference type="ChEBI" id="CHEBI:58017"/>
    </ligand>
</feature>
<feature type="binding site" evidence="1">
    <location>
        <position position="110"/>
    </location>
    <ligand>
        <name>anthranilate</name>
        <dbReference type="ChEBI" id="CHEBI:16567"/>
        <label>1</label>
    </ligand>
</feature>
<feature type="binding site" evidence="1">
    <location>
        <position position="119"/>
    </location>
    <ligand>
        <name>5-phospho-alpha-D-ribose 1-diphosphate</name>
        <dbReference type="ChEBI" id="CHEBI:58017"/>
    </ligand>
</feature>
<feature type="binding site" evidence="1">
    <location>
        <position position="165"/>
    </location>
    <ligand>
        <name>anthranilate</name>
        <dbReference type="ChEBI" id="CHEBI:16567"/>
        <label>2</label>
    </ligand>
</feature>
<feature type="binding site" evidence="1">
    <location>
        <position position="224"/>
    </location>
    <ligand>
        <name>Mg(2+)</name>
        <dbReference type="ChEBI" id="CHEBI:18420"/>
        <label>2</label>
    </ligand>
</feature>
<feature type="binding site" evidence="1">
    <location>
        <position position="225"/>
    </location>
    <ligand>
        <name>Mg(2+)</name>
        <dbReference type="ChEBI" id="CHEBI:18420"/>
        <label>1</label>
    </ligand>
</feature>
<feature type="binding site" evidence="1">
    <location>
        <position position="225"/>
    </location>
    <ligand>
        <name>Mg(2+)</name>
        <dbReference type="ChEBI" id="CHEBI:18420"/>
        <label>2</label>
    </ligand>
</feature>
<organism>
    <name type="scientific">Bacillus anthracis (strain A0248)</name>
    <dbReference type="NCBI Taxonomy" id="592021"/>
    <lineage>
        <taxon>Bacteria</taxon>
        <taxon>Bacillati</taxon>
        <taxon>Bacillota</taxon>
        <taxon>Bacilli</taxon>
        <taxon>Bacillales</taxon>
        <taxon>Bacillaceae</taxon>
        <taxon>Bacillus</taxon>
        <taxon>Bacillus cereus group</taxon>
    </lineage>
</organism>
<accession>C3P3T7</accession>
<sequence>MNNYLRKLVEGQHLTEEEMYKAGLLLLNENILESEIAAFLVLLKAKGETAEEIYGLVRALREKALPFSNHIQGAMDNCGTGGDGAQTFNISTTSAFVLAGAGVKVAKHGNRAVSSKTGSADLLEELGVNISSTPNEIDYLLEHVGIAFLFAPAMHPALKRIMKIRKELNVPTIFNLIGPLTNPVNLETQFVGIYKRDMLLPVAQVLQKLGRKQALVVNGSGFLDEASLQGENHVVILKDNEIVETSIEPEKYGFSIVKNEEIRGGNSKENAKITLGVLSGEKSVYRDTVLFNAGLALFANGKAKTIEEGITLAAHSIDSGKALAKLNLLIAASNEELERVN</sequence>
<dbReference type="EC" id="2.4.2.18" evidence="1"/>
<dbReference type="EMBL" id="CP001598">
    <property type="protein sequence ID" value="ACQ50509.1"/>
    <property type="molecule type" value="Genomic_DNA"/>
</dbReference>
<dbReference type="RefSeq" id="WP_001067344.1">
    <property type="nucleotide sequence ID" value="NC_012659.1"/>
</dbReference>
<dbReference type="SMR" id="C3P3T7"/>
<dbReference type="GeneID" id="45021250"/>
<dbReference type="KEGG" id="bai:BAA_1326"/>
<dbReference type="HOGENOM" id="CLU_034315_2_1_9"/>
<dbReference type="UniPathway" id="UPA00035">
    <property type="reaction ID" value="UER00041"/>
</dbReference>
<dbReference type="GO" id="GO:0005829">
    <property type="term" value="C:cytosol"/>
    <property type="evidence" value="ECO:0007669"/>
    <property type="project" value="TreeGrafter"/>
</dbReference>
<dbReference type="GO" id="GO:0004048">
    <property type="term" value="F:anthranilate phosphoribosyltransferase activity"/>
    <property type="evidence" value="ECO:0007669"/>
    <property type="project" value="UniProtKB-UniRule"/>
</dbReference>
<dbReference type="GO" id="GO:0000287">
    <property type="term" value="F:magnesium ion binding"/>
    <property type="evidence" value="ECO:0007669"/>
    <property type="project" value="UniProtKB-UniRule"/>
</dbReference>
<dbReference type="GO" id="GO:0000162">
    <property type="term" value="P:L-tryptophan biosynthetic process"/>
    <property type="evidence" value="ECO:0007669"/>
    <property type="project" value="UniProtKB-UniRule"/>
</dbReference>
<dbReference type="FunFam" id="3.40.1030.10:FF:000002">
    <property type="entry name" value="Anthranilate phosphoribosyltransferase"/>
    <property type="match status" value="1"/>
</dbReference>
<dbReference type="Gene3D" id="3.40.1030.10">
    <property type="entry name" value="Nucleoside phosphorylase/phosphoribosyltransferase catalytic domain"/>
    <property type="match status" value="1"/>
</dbReference>
<dbReference type="Gene3D" id="1.20.970.10">
    <property type="entry name" value="Transferase, Pyrimidine Nucleoside Phosphorylase, Chain C"/>
    <property type="match status" value="1"/>
</dbReference>
<dbReference type="HAMAP" id="MF_00211">
    <property type="entry name" value="TrpD"/>
    <property type="match status" value="1"/>
</dbReference>
<dbReference type="InterPro" id="IPR005940">
    <property type="entry name" value="Anthranilate_Pribosyl_Tfrase"/>
</dbReference>
<dbReference type="InterPro" id="IPR000312">
    <property type="entry name" value="Glycosyl_Trfase_fam3"/>
</dbReference>
<dbReference type="InterPro" id="IPR017459">
    <property type="entry name" value="Glycosyl_Trfase_fam3_N_dom"/>
</dbReference>
<dbReference type="InterPro" id="IPR036320">
    <property type="entry name" value="Glycosyl_Trfase_fam3_N_dom_sf"/>
</dbReference>
<dbReference type="InterPro" id="IPR035902">
    <property type="entry name" value="Nuc_phospho_transferase"/>
</dbReference>
<dbReference type="NCBIfam" id="TIGR01245">
    <property type="entry name" value="trpD"/>
    <property type="match status" value="1"/>
</dbReference>
<dbReference type="PANTHER" id="PTHR43285">
    <property type="entry name" value="ANTHRANILATE PHOSPHORIBOSYLTRANSFERASE"/>
    <property type="match status" value="1"/>
</dbReference>
<dbReference type="PANTHER" id="PTHR43285:SF2">
    <property type="entry name" value="ANTHRANILATE PHOSPHORIBOSYLTRANSFERASE"/>
    <property type="match status" value="1"/>
</dbReference>
<dbReference type="Pfam" id="PF02885">
    <property type="entry name" value="Glycos_trans_3N"/>
    <property type="match status" value="1"/>
</dbReference>
<dbReference type="Pfam" id="PF00591">
    <property type="entry name" value="Glycos_transf_3"/>
    <property type="match status" value="1"/>
</dbReference>
<dbReference type="SUPFAM" id="SSF52418">
    <property type="entry name" value="Nucleoside phosphorylase/phosphoribosyltransferase catalytic domain"/>
    <property type="match status" value="1"/>
</dbReference>
<dbReference type="SUPFAM" id="SSF47648">
    <property type="entry name" value="Nucleoside phosphorylase/phosphoribosyltransferase N-terminal domain"/>
    <property type="match status" value="1"/>
</dbReference>
<protein>
    <recommendedName>
        <fullName evidence="1">Anthranilate phosphoribosyltransferase</fullName>
        <ecNumber evidence="1">2.4.2.18</ecNumber>
    </recommendedName>
</protein>
<comment type="function">
    <text evidence="1">Catalyzes the transfer of the phosphoribosyl group of 5-phosphorylribose-1-pyrophosphate (PRPP) to anthranilate to yield N-(5'-phosphoribosyl)-anthranilate (PRA).</text>
</comment>
<comment type="catalytic activity">
    <reaction evidence="1">
        <text>N-(5-phospho-beta-D-ribosyl)anthranilate + diphosphate = 5-phospho-alpha-D-ribose 1-diphosphate + anthranilate</text>
        <dbReference type="Rhea" id="RHEA:11768"/>
        <dbReference type="ChEBI" id="CHEBI:16567"/>
        <dbReference type="ChEBI" id="CHEBI:18277"/>
        <dbReference type="ChEBI" id="CHEBI:33019"/>
        <dbReference type="ChEBI" id="CHEBI:58017"/>
        <dbReference type="EC" id="2.4.2.18"/>
    </reaction>
</comment>
<comment type="cofactor">
    <cofactor evidence="1">
        <name>Mg(2+)</name>
        <dbReference type="ChEBI" id="CHEBI:18420"/>
    </cofactor>
    <text evidence="1">Binds 2 magnesium ions per monomer.</text>
</comment>
<comment type="pathway">
    <text evidence="1">Amino-acid biosynthesis; L-tryptophan biosynthesis; L-tryptophan from chorismate: step 2/5.</text>
</comment>
<comment type="subunit">
    <text evidence="1">Homodimer.</text>
</comment>
<comment type="similarity">
    <text evidence="1">Belongs to the anthranilate phosphoribosyltransferase family.</text>
</comment>
<name>TRPD_BACAA</name>
<proteinExistence type="inferred from homology"/>
<reference key="1">
    <citation type="submission" date="2009-04" db="EMBL/GenBank/DDBJ databases">
        <title>Genome sequence of Bacillus anthracis A0248.</title>
        <authorList>
            <person name="Dodson R.J."/>
            <person name="Munk A.C."/>
            <person name="Bruce D."/>
            <person name="Detter C."/>
            <person name="Tapia R."/>
            <person name="Sutton G."/>
            <person name="Sims D."/>
            <person name="Brettin T."/>
        </authorList>
    </citation>
    <scope>NUCLEOTIDE SEQUENCE [LARGE SCALE GENOMIC DNA]</scope>
    <source>
        <strain>A0248</strain>
    </source>
</reference>